<dbReference type="EMBL" id="CP037923">
    <property type="protein sequence ID" value="QCC33844.1"/>
    <property type="molecule type" value="Genomic_DNA"/>
</dbReference>
<dbReference type="RefSeq" id="WP_001157751.1">
    <property type="nucleotide sequence ID" value="NZ_JANXIZ010000001.1"/>
</dbReference>
<dbReference type="SMR" id="A0A4P7TS68"/>
<dbReference type="GeneID" id="98390506"/>
<dbReference type="Proteomes" id="UP000296678">
    <property type="component" value="Chromosome"/>
</dbReference>
<dbReference type="GO" id="GO:0005829">
    <property type="term" value="C:cytosol"/>
    <property type="evidence" value="ECO:0007669"/>
    <property type="project" value="TreeGrafter"/>
</dbReference>
<dbReference type="GO" id="GO:0032993">
    <property type="term" value="C:protein-DNA complex"/>
    <property type="evidence" value="ECO:0007669"/>
    <property type="project" value="TreeGrafter"/>
</dbReference>
<dbReference type="GO" id="GO:0000156">
    <property type="term" value="F:phosphorelay response regulator activity"/>
    <property type="evidence" value="ECO:0007669"/>
    <property type="project" value="TreeGrafter"/>
</dbReference>
<dbReference type="GO" id="GO:0000976">
    <property type="term" value="F:transcription cis-regulatory region binding"/>
    <property type="evidence" value="ECO:0007669"/>
    <property type="project" value="TreeGrafter"/>
</dbReference>
<dbReference type="GO" id="GO:0006355">
    <property type="term" value="P:regulation of DNA-templated transcription"/>
    <property type="evidence" value="ECO:0007669"/>
    <property type="project" value="InterPro"/>
</dbReference>
<dbReference type="CDD" id="cd00383">
    <property type="entry name" value="trans_reg_C"/>
    <property type="match status" value="1"/>
</dbReference>
<dbReference type="FunFam" id="1.10.10.10:FF:000023">
    <property type="entry name" value="Two-component response regulator OmpR"/>
    <property type="match status" value="1"/>
</dbReference>
<dbReference type="FunFam" id="3.40.50.2300:FF:000008">
    <property type="entry name" value="Two-component response regulator OmpR"/>
    <property type="match status" value="1"/>
</dbReference>
<dbReference type="Gene3D" id="3.40.50.2300">
    <property type="match status" value="1"/>
</dbReference>
<dbReference type="Gene3D" id="6.10.250.690">
    <property type="match status" value="1"/>
</dbReference>
<dbReference type="Gene3D" id="1.10.10.10">
    <property type="entry name" value="Winged helix-like DNA-binding domain superfamily/Winged helix DNA-binding domain"/>
    <property type="match status" value="1"/>
</dbReference>
<dbReference type="InterPro" id="IPR011006">
    <property type="entry name" value="CheY-like_superfamily"/>
</dbReference>
<dbReference type="InterPro" id="IPR001867">
    <property type="entry name" value="OmpR/PhoB-type_DNA-bd"/>
</dbReference>
<dbReference type="InterPro" id="IPR016032">
    <property type="entry name" value="Sig_transdc_resp-reg_C-effctor"/>
</dbReference>
<dbReference type="InterPro" id="IPR001789">
    <property type="entry name" value="Sig_transdc_resp-reg_receiver"/>
</dbReference>
<dbReference type="InterPro" id="IPR039420">
    <property type="entry name" value="WalR-like"/>
</dbReference>
<dbReference type="InterPro" id="IPR036388">
    <property type="entry name" value="WH-like_DNA-bd_sf"/>
</dbReference>
<dbReference type="NCBIfam" id="NF007005">
    <property type="entry name" value="PRK09468.1"/>
    <property type="match status" value="1"/>
</dbReference>
<dbReference type="PANTHER" id="PTHR48111:SF4">
    <property type="entry name" value="DNA-BINDING DUAL TRANSCRIPTIONAL REGULATOR OMPR"/>
    <property type="match status" value="1"/>
</dbReference>
<dbReference type="PANTHER" id="PTHR48111">
    <property type="entry name" value="REGULATOR OF RPOS"/>
    <property type="match status" value="1"/>
</dbReference>
<dbReference type="Pfam" id="PF00072">
    <property type="entry name" value="Response_reg"/>
    <property type="match status" value="1"/>
</dbReference>
<dbReference type="Pfam" id="PF00486">
    <property type="entry name" value="Trans_reg_C"/>
    <property type="match status" value="1"/>
</dbReference>
<dbReference type="SMART" id="SM00448">
    <property type="entry name" value="REC"/>
    <property type="match status" value="1"/>
</dbReference>
<dbReference type="SMART" id="SM00862">
    <property type="entry name" value="Trans_reg_C"/>
    <property type="match status" value="1"/>
</dbReference>
<dbReference type="SUPFAM" id="SSF46894">
    <property type="entry name" value="C-terminal effector domain of the bipartite response regulators"/>
    <property type="match status" value="1"/>
</dbReference>
<dbReference type="SUPFAM" id="SSF52172">
    <property type="entry name" value="CheY-like"/>
    <property type="match status" value="1"/>
</dbReference>
<dbReference type="PROSITE" id="PS51755">
    <property type="entry name" value="OMPR_PHOB"/>
    <property type="match status" value="1"/>
</dbReference>
<dbReference type="PROSITE" id="PS50110">
    <property type="entry name" value="RESPONSE_REGULATORY"/>
    <property type="match status" value="1"/>
</dbReference>
<accession>A0A4P7TS68</accession>
<gene>
    <name type="primary">ompR</name>
    <name type="ORF">EKN05_021990</name>
</gene>
<evidence type="ECO:0000250" key="1">
    <source>
        <dbReference type="UniProtKB" id="P0AA16"/>
    </source>
</evidence>
<evidence type="ECO:0000255" key="2">
    <source>
        <dbReference type="PROSITE-ProRule" id="PRU00169"/>
    </source>
</evidence>
<evidence type="ECO:0000255" key="3">
    <source>
        <dbReference type="PROSITE-ProRule" id="PRU01091"/>
    </source>
</evidence>
<evidence type="ECO:0000269" key="4">
    <source>
    </source>
</evidence>
<evidence type="ECO:0000269" key="5">
    <source>
    </source>
</evidence>
<evidence type="ECO:0000305" key="6"/>
<sequence length="239" mass="27354">MQENYKILVVDDDMRLRALLERYLTEQGFQVRSVANAEQMDRLLTRESFHLMVLDLMLPGEDGLSICRRLRSQSNPMPIIMVTAKGEEVDRIVGLEIGADDYIPKPFNPRELLARIRAVLRRQANELPGAPSQEEAVIAFGKFKLNLGTREMFREDEPMPLTSGEFAVLKALVSHPREPLSRDKLMNLARGREYSAMERSIDVQISRLRRMVEEDPAHPRYIQTVWGLGYVFVPDGSKA</sequence>
<protein>
    <recommendedName>
        <fullName evidence="6">DNA-binding dual transcriptional regulator OmpR</fullName>
    </recommendedName>
    <alternativeName>
        <fullName evidence="6">Transcriptional regulatory protein OmpR</fullName>
    </alternativeName>
</protein>
<feature type="chain" id="PRO_0000448907" description="DNA-binding dual transcriptional regulator OmpR">
    <location>
        <begin position="1"/>
        <end position="239"/>
    </location>
</feature>
<feature type="domain" description="Response regulatory" evidence="2">
    <location>
        <begin position="6"/>
        <end position="120"/>
    </location>
</feature>
<feature type="DNA-binding region" description="OmpR/PhoB-type" evidence="3">
    <location>
        <begin position="135"/>
        <end position="234"/>
    </location>
</feature>
<feature type="modified residue" description="4-aspartylphosphate" evidence="1 2">
    <location>
        <position position="55"/>
    </location>
</feature>
<proteinExistence type="evidence at protein level"/>
<comment type="function">
    <text evidence="4 5">Member of the two-component regulatory system EnvZ/OmpR involved in regulating expression of the outer membrane porins OmpC and OmpF as well as other genes. Unlike E.coli, OmpC is expressed at both low and high osmolarity, while OmpF is expressed at low osmolarity (PubMed:8359885). This two-component system plays a role in virulence (PubMed:2121709, PubMed:8359885). Virulence genes of the vir locus are up-regulated within 30 minutes upon growth in high osmolarity medium (PubMed:2121709).</text>
</comment>
<comment type="subunit">
    <text evidence="1">Monomer and multimer.</text>
</comment>
<comment type="subcellular location">
    <subcellularLocation>
        <location evidence="1">Cytoplasm</location>
    </subcellularLocation>
</comment>
<comment type="PTM">
    <text evidence="1">Phosphorylated by EnvZ; this stimulates its DNA-binding ability. Asp-55 is the primary phosphate acceptor site.</text>
</comment>
<comment type="disruption phenotype">
    <text evidence="4 5">A double ompR-envZ deletion invades HeLa cells less well than the single mutant, has a limited ability to multiply in host cells and does not cause keratoconjunctivitis in guinea pigs (PubMed:2121709). A double ompR-envZ deletion has a lowered rate of infection of HeLa cells. Bacteria are seriously impaired in their ability to spread between host cells. The double deletion strain expresses very low amounts of OmpC and no OmpF (PubMed:8359885).</text>
</comment>
<keyword id="KW-0010">Activator</keyword>
<keyword id="KW-0963">Cytoplasm</keyword>
<keyword id="KW-0238">DNA-binding</keyword>
<keyword id="KW-0597">Phosphoprotein</keyword>
<keyword id="KW-0678">Repressor</keyword>
<keyword id="KW-0346">Stress response</keyword>
<keyword id="KW-0804">Transcription</keyword>
<keyword id="KW-0805">Transcription regulation</keyword>
<keyword id="KW-0902">Two-component regulatory system</keyword>
<keyword id="KW-0843">Virulence</keyword>
<name>OMPR_SHIFM</name>
<reference key="1">
    <citation type="submission" date="2019-03" db="EMBL/GenBank/DDBJ databases">
        <title>Complete genome sequence and annotation of the laboratory reference strain Shigella flexneri 5a M90T and genome-wide transcription start site determination.</title>
        <authorList>
            <person name="Cervantes-Rivera R."/>
            <person name="Puhar A."/>
        </authorList>
    </citation>
    <scope>NUCLEOTIDE SEQUENCE [LARGE SCALE GENOMIC DNA]</scope>
    <source>
        <strain>M90T / Serotype 5a</strain>
    </source>
</reference>
<reference key="2">
    <citation type="journal article" date="1990" name="J. Bacteriol.">
        <title>The two-component regulatory system ompR-envZ controls the virulence of Shigella flexneri.</title>
        <authorList>
            <person name="Bernardini M.L."/>
            <person name="Fontaine A."/>
            <person name="Sansonetti P.J."/>
        </authorList>
    </citation>
    <scope>FUNCTION IN VIRULENCE</scope>
    <scope>DISRUPTION PHENOTYPE</scope>
    <source>
        <strain>M90T / Serotype 5a</strain>
    </source>
</reference>
<reference key="3">
    <citation type="journal article" date="1993" name="Infect. Immun.">
        <title>OmpC is involved in invasion of epithelial cells by Shigella flexneri.</title>
        <authorList>
            <person name="Bernardini M.L."/>
            <person name="Sanna M.G."/>
            <person name="Fontaine A."/>
            <person name="Sansonetti P.J."/>
        </authorList>
    </citation>
    <scope>FUNCTION IN VIRULENCE</scope>
    <scope>DISRUPTION PHENOTYPE</scope>
    <source>
        <strain>M90T / Serotype 5a</strain>
    </source>
</reference>
<organism>
    <name type="scientific">Shigella flexneri serotype 5a (strain M90T)</name>
    <dbReference type="NCBI Taxonomy" id="1086030"/>
    <lineage>
        <taxon>Bacteria</taxon>
        <taxon>Pseudomonadati</taxon>
        <taxon>Pseudomonadota</taxon>
        <taxon>Gammaproteobacteria</taxon>
        <taxon>Enterobacterales</taxon>
        <taxon>Enterobacteriaceae</taxon>
        <taxon>Shigella</taxon>
    </lineage>
</organism>